<proteinExistence type="inferred from homology"/>
<sequence length="323" mass="35657">MEKNDKEKRELTIEDLPGVGDATAEKLRESGYDDIMTIAVASPKDLAEISGIAEGAAIKIINAARKYADVGNFETGEEILNKRKEIKKLTTGSSNLDNLLGGGLETQSITEFFGEFGSGKTQIMHQLAVNATMPVEKNGFDSDVLIIDTENTFRPERIIQMARAKDLDPDQTLERIHVARAYNSHHQILLAEKAADMAREYKIRLLIVDSLTSHFRSEYVGRGSLAERQQLLNRHMHDLLKFGTIYNAVIAVTNQVSANPAVFFGDPMNPIGGNIVGHTATFRIYLRKAKAGKRIARLIDSPYLPEGETVITITESGITDGEK</sequence>
<gene>
    <name evidence="1" type="primary">radA</name>
    <name type="ordered locus">PTO0741</name>
</gene>
<comment type="function">
    <text evidence="1">Involved in DNA repair and in homologous recombination. Binds and assemble on single-stranded DNA to form a nucleoprotein filament. Hydrolyzes ATP in a ssDNA-dependent manner and promotes DNA strand exchange between homologous DNA molecules.</text>
</comment>
<comment type="similarity">
    <text evidence="1">Belongs to the eukaryotic RecA-like protein family.</text>
</comment>
<reference key="1">
    <citation type="journal article" date="2004" name="Proc. Natl. Acad. Sci. U.S.A.">
        <title>Genome sequence of Picrophilus torridus and its implications for life around pH 0.</title>
        <authorList>
            <person name="Fuetterer O."/>
            <person name="Angelov A."/>
            <person name="Liesegang H."/>
            <person name="Gottschalk G."/>
            <person name="Schleper C."/>
            <person name="Schepers B."/>
            <person name="Dock C."/>
            <person name="Antranikian G."/>
            <person name="Liebl W."/>
        </authorList>
    </citation>
    <scope>NUCLEOTIDE SEQUENCE [LARGE SCALE GENOMIC DNA]</scope>
    <source>
        <strain>ATCC 700027 / DSM 9790 / JCM 10055 / NBRC 100828 / KAW 2/3</strain>
    </source>
</reference>
<protein>
    <recommendedName>
        <fullName evidence="1">DNA repair and recombination protein RadA</fullName>
    </recommendedName>
</protein>
<evidence type="ECO:0000255" key="1">
    <source>
        <dbReference type="HAMAP-Rule" id="MF_00348"/>
    </source>
</evidence>
<dbReference type="EMBL" id="AE017261">
    <property type="protein sequence ID" value="AAT43326.1"/>
    <property type="molecule type" value="Genomic_DNA"/>
</dbReference>
<dbReference type="RefSeq" id="WP_011177542.1">
    <property type="nucleotide sequence ID" value="NC_005877.1"/>
</dbReference>
<dbReference type="SMR" id="Q6L126"/>
<dbReference type="FunCoup" id="Q6L126">
    <property type="interactions" value="125"/>
</dbReference>
<dbReference type="STRING" id="263820.PTO0741"/>
<dbReference type="PaxDb" id="263820-PTO0741"/>
<dbReference type="GeneID" id="2845061"/>
<dbReference type="KEGG" id="pto:PTO0741"/>
<dbReference type="PATRIC" id="fig|263820.9.peg.776"/>
<dbReference type="eggNOG" id="arCOG00415">
    <property type="taxonomic scope" value="Archaea"/>
</dbReference>
<dbReference type="HOGENOM" id="CLU_041732_0_0_2"/>
<dbReference type="InParanoid" id="Q6L126"/>
<dbReference type="OrthoDB" id="31129at2157"/>
<dbReference type="Proteomes" id="UP000000438">
    <property type="component" value="Chromosome"/>
</dbReference>
<dbReference type="GO" id="GO:0005524">
    <property type="term" value="F:ATP binding"/>
    <property type="evidence" value="ECO:0007669"/>
    <property type="project" value="UniProtKB-UniRule"/>
</dbReference>
<dbReference type="GO" id="GO:0016887">
    <property type="term" value="F:ATP hydrolysis activity"/>
    <property type="evidence" value="ECO:0007669"/>
    <property type="project" value="InterPro"/>
</dbReference>
<dbReference type="GO" id="GO:0140664">
    <property type="term" value="F:ATP-dependent DNA damage sensor activity"/>
    <property type="evidence" value="ECO:0007669"/>
    <property type="project" value="InterPro"/>
</dbReference>
<dbReference type="GO" id="GO:0003684">
    <property type="term" value="F:damaged DNA binding"/>
    <property type="evidence" value="ECO:0007669"/>
    <property type="project" value="UniProtKB-UniRule"/>
</dbReference>
<dbReference type="GO" id="GO:0006310">
    <property type="term" value="P:DNA recombination"/>
    <property type="evidence" value="ECO:0007669"/>
    <property type="project" value="UniProtKB-UniRule"/>
</dbReference>
<dbReference type="GO" id="GO:0006281">
    <property type="term" value="P:DNA repair"/>
    <property type="evidence" value="ECO:0007669"/>
    <property type="project" value="UniProtKB-UniRule"/>
</dbReference>
<dbReference type="CDD" id="cd19515">
    <property type="entry name" value="archRadA"/>
    <property type="match status" value="1"/>
</dbReference>
<dbReference type="FunFam" id="3.40.50.300:FF:002052">
    <property type="entry name" value="DNA repair protein RAD51 homolog"/>
    <property type="match status" value="1"/>
</dbReference>
<dbReference type="Gene3D" id="1.10.150.20">
    <property type="entry name" value="5' to 3' exonuclease, C-terminal subdomain"/>
    <property type="match status" value="1"/>
</dbReference>
<dbReference type="Gene3D" id="3.40.50.300">
    <property type="entry name" value="P-loop containing nucleotide triphosphate hydrolases"/>
    <property type="match status" value="1"/>
</dbReference>
<dbReference type="HAMAP" id="MF_00348">
    <property type="entry name" value="RadA_arch"/>
    <property type="match status" value="1"/>
</dbReference>
<dbReference type="InterPro" id="IPR003593">
    <property type="entry name" value="AAA+_ATPase"/>
</dbReference>
<dbReference type="InterPro" id="IPR013632">
    <property type="entry name" value="DNA_recomb/repair_Rad51_C"/>
</dbReference>
<dbReference type="InterPro" id="IPR011938">
    <property type="entry name" value="DNA_recomb/repair_RadA"/>
</dbReference>
<dbReference type="InterPro" id="IPR016467">
    <property type="entry name" value="DNA_recomb/repair_RecA-like"/>
</dbReference>
<dbReference type="InterPro" id="IPR010995">
    <property type="entry name" value="DNA_repair_Rad51/TF_NusA_a-hlx"/>
</dbReference>
<dbReference type="InterPro" id="IPR003583">
    <property type="entry name" value="Hlx-hairpin-Hlx_DNA-bd_motif"/>
</dbReference>
<dbReference type="InterPro" id="IPR027417">
    <property type="entry name" value="P-loop_NTPase"/>
</dbReference>
<dbReference type="InterPro" id="IPR020588">
    <property type="entry name" value="RecA_ATP-bd"/>
</dbReference>
<dbReference type="InterPro" id="IPR020587">
    <property type="entry name" value="RecA_monomer-monomer_interface"/>
</dbReference>
<dbReference type="NCBIfam" id="NF003301">
    <property type="entry name" value="PRK04301.1"/>
    <property type="match status" value="1"/>
</dbReference>
<dbReference type="NCBIfam" id="TIGR02236">
    <property type="entry name" value="recomb_radA"/>
    <property type="match status" value="1"/>
</dbReference>
<dbReference type="PANTHER" id="PTHR22942:SF30">
    <property type="entry name" value="MEIOTIC RECOMBINATION PROTEIN DMC1_LIM15 HOMOLOG"/>
    <property type="match status" value="1"/>
</dbReference>
<dbReference type="PANTHER" id="PTHR22942">
    <property type="entry name" value="RECA/RAD51/RADA DNA STRAND-PAIRING FAMILY MEMBER"/>
    <property type="match status" value="1"/>
</dbReference>
<dbReference type="Pfam" id="PF14520">
    <property type="entry name" value="HHH_5"/>
    <property type="match status" value="1"/>
</dbReference>
<dbReference type="Pfam" id="PF08423">
    <property type="entry name" value="Rad51"/>
    <property type="match status" value="1"/>
</dbReference>
<dbReference type="PIRSF" id="PIRSF005856">
    <property type="entry name" value="Rad51"/>
    <property type="match status" value="1"/>
</dbReference>
<dbReference type="SMART" id="SM00382">
    <property type="entry name" value="AAA"/>
    <property type="match status" value="1"/>
</dbReference>
<dbReference type="SMART" id="SM00278">
    <property type="entry name" value="HhH1"/>
    <property type="match status" value="2"/>
</dbReference>
<dbReference type="SUPFAM" id="SSF52540">
    <property type="entry name" value="P-loop containing nucleoside triphosphate hydrolases"/>
    <property type="match status" value="1"/>
</dbReference>
<dbReference type="SUPFAM" id="SSF47794">
    <property type="entry name" value="Rad51 N-terminal domain-like"/>
    <property type="match status" value="1"/>
</dbReference>
<dbReference type="PROSITE" id="PS50162">
    <property type="entry name" value="RECA_2"/>
    <property type="match status" value="1"/>
</dbReference>
<dbReference type="PROSITE" id="PS50163">
    <property type="entry name" value="RECA_3"/>
    <property type="match status" value="1"/>
</dbReference>
<accession>Q6L126</accession>
<feature type="chain" id="PRO_0000150101" description="DNA repair and recombination protein RadA">
    <location>
        <begin position="1"/>
        <end position="323"/>
    </location>
</feature>
<feature type="binding site" evidence="1">
    <location>
        <begin position="114"/>
        <end position="121"/>
    </location>
    <ligand>
        <name>ATP</name>
        <dbReference type="ChEBI" id="CHEBI:30616"/>
    </ligand>
</feature>
<keyword id="KW-0067">ATP-binding</keyword>
<keyword id="KW-0227">DNA damage</keyword>
<keyword id="KW-0233">DNA recombination</keyword>
<keyword id="KW-0238">DNA-binding</keyword>
<keyword id="KW-0547">Nucleotide-binding</keyword>
<organism>
    <name type="scientific">Picrophilus torridus (strain ATCC 700027 / DSM 9790 / JCM 10055 / NBRC 100828 / KAW 2/3)</name>
    <dbReference type="NCBI Taxonomy" id="1122961"/>
    <lineage>
        <taxon>Archaea</taxon>
        <taxon>Methanobacteriati</taxon>
        <taxon>Thermoplasmatota</taxon>
        <taxon>Thermoplasmata</taxon>
        <taxon>Thermoplasmatales</taxon>
        <taxon>Picrophilaceae</taxon>
        <taxon>Picrophilus</taxon>
    </lineage>
</organism>
<name>RADA_PICTO</name>